<gene>
    <name evidence="1" type="primary">psmB1</name>
    <name type="ordered locus">Ssol_1254</name>
</gene>
<keyword id="KW-0068">Autocatalytic cleavage</keyword>
<keyword id="KW-0963">Cytoplasm</keyword>
<keyword id="KW-0378">Hydrolase</keyword>
<keyword id="KW-0645">Protease</keyword>
<keyword id="KW-0647">Proteasome</keyword>
<keyword id="KW-0888">Threonine protease</keyword>
<keyword id="KW-0865">Zymogen</keyword>
<comment type="function">
    <text evidence="1">Component of the proteasome core, a large protease complex with broad specificity involved in protein degradation.</text>
</comment>
<comment type="catalytic activity">
    <reaction evidence="1">
        <text>Cleavage of peptide bonds with very broad specificity.</text>
        <dbReference type="EC" id="3.4.25.1"/>
    </reaction>
</comment>
<comment type="activity regulation">
    <text evidence="1">The formation of the proteasomal ATPase PAN-20S proteasome complex, via the docking of the C-termini of PAN into the intersubunit pockets in the alpha-rings, triggers opening of the gate for substrate entry. Interconversion between the open-gate and close-gate conformations leads to a dynamic regulation of the 20S proteasome proteolysis activity.</text>
</comment>
<comment type="subunit">
    <text evidence="1">The 20S proteasome core is composed of 14 alpha and 14 beta subunits that assemble into four stacked heptameric rings, resulting in a barrel-shaped structure. The two inner rings, each composed of seven catalytic beta subunits, are sandwiched by two outer rings, each composed of seven alpha subunits. The catalytic chamber with the active sites is on the inside of the barrel. Has a gated structure, the ends of the cylinder being occluded by the N-termini of the alpha-subunits. Is capped at one or both ends by the proteasome regulatory ATPase, PAN.</text>
</comment>
<comment type="subcellular location">
    <subcellularLocation>
        <location evidence="1">Cytoplasm</location>
    </subcellularLocation>
</comment>
<comment type="similarity">
    <text evidence="1">Belongs to the peptidase T1B family.</text>
</comment>
<evidence type="ECO:0000255" key="1">
    <source>
        <dbReference type="HAMAP-Rule" id="MF_02113"/>
    </source>
</evidence>
<proteinExistence type="inferred from homology"/>
<accession>D0KRX1</accession>
<protein>
    <recommendedName>
        <fullName evidence="1">Proteasome subunit beta 1</fullName>
        <ecNumber evidence="1">3.4.25.1</ecNumber>
    </recommendedName>
    <alternativeName>
        <fullName evidence="1">20S proteasome beta subunit 1</fullName>
    </alternativeName>
    <alternativeName>
        <fullName evidence="1">Proteasome core protein PsmB 1</fullName>
    </alternativeName>
</protein>
<sequence>MEELPATAVGLKVNDGIVLASERRLSYGGYVLSKQAKKVYKINKFLMAGAGIYGDLQTLTRIMNVEIKYYEVSTGKPISVHAAAKLLSVILYQYKVMPFISEILFGGVDEKGPQLYVLDPIGSLIEDNYAAVGSGARIAIGVLESEYDPNMSLDVATQLITKAIKASIERDITSGDGIDLAIIDKKGNYENKFIPY</sequence>
<name>PSB1_SACS9</name>
<feature type="propeptide" id="PRO_0000397456" description="Removed in mature form; by autocatalysis" evidence="1">
    <location>
        <begin position="1"/>
        <end position="6"/>
    </location>
</feature>
<feature type="chain" id="PRO_0000397457" description="Proteasome subunit beta 1">
    <location>
        <begin position="7"/>
        <end position="196"/>
    </location>
</feature>
<feature type="active site" description="Nucleophile" evidence="1">
    <location>
        <position position="7"/>
    </location>
</feature>
<dbReference type="EC" id="3.4.25.1" evidence="1"/>
<dbReference type="EMBL" id="CP001800">
    <property type="protein sequence ID" value="ACX91490.1"/>
    <property type="molecule type" value="Genomic_DNA"/>
</dbReference>
<dbReference type="RefSeq" id="WP_009990557.1">
    <property type="nucleotide sequence ID" value="NZ_ACUK01000119.1"/>
</dbReference>
<dbReference type="SMR" id="D0KRX1"/>
<dbReference type="GeneID" id="1455426"/>
<dbReference type="KEGG" id="sol:Ssol_1254"/>
<dbReference type="HOGENOM" id="CLU_035750_7_2_2"/>
<dbReference type="GO" id="GO:0005737">
    <property type="term" value="C:cytoplasm"/>
    <property type="evidence" value="ECO:0007669"/>
    <property type="project" value="UniProtKB-SubCell"/>
</dbReference>
<dbReference type="GO" id="GO:0019774">
    <property type="term" value="C:proteasome core complex, beta-subunit complex"/>
    <property type="evidence" value="ECO:0007669"/>
    <property type="project" value="UniProtKB-UniRule"/>
</dbReference>
<dbReference type="GO" id="GO:0004298">
    <property type="term" value="F:threonine-type endopeptidase activity"/>
    <property type="evidence" value="ECO:0007669"/>
    <property type="project" value="UniProtKB-UniRule"/>
</dbReference>
<dbReference type="GO" id="GO:0010498">
    <property type="term" value="P:proteasomal protein catabolic process"/>
    <property type="evidence" value="ECO:0007669"/>
    <property type="project" value="UniProtKB-UniRule"/>
</dbReference>
<dbReference type="FunFam" id="3.60.20.10:FF:000079">
    <property type="entry name" value="Proteasome subunit beta 2"/>
    <property type="match status" value="1"/>
</dbReference>
<dbReference type="Gene3D" id="3.60.20.10">
    <property type="entry name" value="Glutamine Phosphoribosylpyrophosphate, subunit 1, domain 1"/>
    <property type="match status" value="1"/>
</dbReference>
<dbReference type="HAMAP" id="MF_02113_A">
    <property type="entry name" value="Proteasome_B_A"/>
    <property type="match status" value="1"/>
</dbReference>
<dbReference type="InterPro" id="IPR029055">
    <property type="entry name" value="Ntn_hydrolases_N"/>
</dbReference>
<dbReference type="InterPro" id="IPR019983">
    <property type="entry name" value="Pept_T1A_Psome_bsu_arc"/>
</dbReference>
<dbReference type="InterPro" id="IPR000243">
    <property type="entry name" value="Pept_T1A_subB"/>
</dbReference>
<dbReference type="InterPro" id="IPR016050">
    <property type="entry name" value="Proteasome_bsu_CS"/>
</dbReference>
<dbReference type="InterPro" id="IPR001353">
    <property type="entry name" value="Proteasome_sua/b"/>
</dbReference>
<dbReference type="InterPro" id="IPR023333">
    <property type="entry name" value="Proteasome_suB-type"/>
</dbReference>
<dbReference type="NCBIfam" id="TIGR03634">
    <property type="entry name" value="arc_protsome_B"/>
    <property type="match status" value="1"/>
</dbReference>
<dbReference type="PANTHER" id="PTHR32194:SF0">
    <property type="entry name" value="ATP-DEPENDENT PROTEASE SUBUNIT HSLV"/>
    <property type="match status" value="1"/>
</dbReference>
<dbReference type="PANTHER" id="PTHR32194">
    <property type="entry name" value="METALLOPROTEASE TLDD"/>
    <property type="match status" value="1"/>
</dbReference>
<dbReference type="Pfam" id="PF00227">
    <property type="entry name" value="Proteasome"/>
    <property type="match status" value="1"/>
</dbReference>
<dbReference type="PRINTS" id="PR00141">
    <property type="entry name" value="PROTEASOME"/>
</dbReference>
<dbReference type="SUPFAM" id="SSF56235">
    <property type="entry name" value="N-terminal nucleophile aminohydrolases (Ntn hydrolases)"/>
    <property type="match status" value="1"/>
</dbReference>
<dbReference type="PROSITE" id="PS00854">
    <property type="entry name" value="PROTEASOME_BETA_1"/>
    <property type="match status" value="1"/>
</dbReference>
<dbReference type="PROSITE" id="PS51476">
    <property type="entry name" value="PROTEASOME_BETA_2"/>
    <property type="match status" value="1"/>
</dbReference>
<organism>
    <name type="scientific">Saccharolobus solfataricus (strain 98/2)</name>
    <name type="common">Sulfolobus solfataricus</name>
    <dbReference type="NCBI Taxonomy" id="555311"/>
    <lineage>
        <taxon>Archaea</taxon>
        <taxon>Thermoproteota</taxon>
        <taxon>Thermoprotei</taxon>
        <taxon>Sulfolobales</taxon>
        <taxon>Sulfolobaceae</taxon>
        <taxon>Saccharolobus</taxon>
    </lineage>
</organism>
<reference key="1">
    <citation type="submission" date="2009-10" db="EMBL/GenBank/DDBJ databases">
        <title>Complete sequence of Sulfolobus solfataricus 98/2.</title>
        <authorList>
            <consortium name="US DOE Joint Genome Institute"/>
            <person name="Lucas S."/>
            <person name="Copeland A."/>
            <person name="Lapidus A."/>
            <person name="Glavina del Rio T."/>
            <person name="Tice H."/>
            <person name="Bruce D."/>
            <person name="Goodwin L."/>
            <person name="Pitluck S."/>
            <person name="Munk A.C."/>
            <person name="Brettin T."/>
            <person name="Detter J.C."/>
            <person name="Han C."/>
            <person name="Tapia R."/>
            <person name="Larimer F."/>
            <person name="Land M."/>
            <person name="Hauser L."/>
            <person name="Kyrpides N."/>
            <person name="Ovchinnikova G."/>
            <person name="Mead D."/>
        </authorList>
    </citation>
    <scope>NUCLEOTIDE SEQUENCE [LARGE SCALE GENOMIC DNA]</scope>
    <source>
        <strain>98/2</strain>
    </source>
</reference>